<dbReference type="EMBL" id="CP000850">
    <property type="protein sequence ID" value="ABV97685.1"/>
    <property type="molecule type" value="Genomic_DNA"/>
</dbReference>
<dbReference type="SMR" id="A8LXW8"/>
<dbReference type="STRING" id="391037.Sare_1799"/>
<dbReference type="KEGG" id="saq:Sare_1799"/>
<dbReference type="PATRIC" id="fig|391037.6.peg.1830"/>
<dbReference type="eggNOG" id="COG0632">
    <property type="taxonomic scope" value="Bacteria"/>
</dbReference>
<dbReference type="HOGENOM" id="CLU_087936_2_1_11"/>
<dbReference type="OrthoDB" id="5293449at2"/>
<dbReference type="GO" id="GO:0005737">
    <property type="term" value="C:cytoplasm"/>
    <property type="evidence" value="ECO:0007669"/>
    <property type="project" value="UniProtKB-SubCell"/>
</dbReference>
<dbReference type="GO" id="GO:0009379">
    <property type="term" value="C:Holliday junction helicase complex"/>
    <property type="evidence" value="ECO:0007669"/>
    <property type="project" value="InterPro"/>
</dbReference>
<dbReference type="GO" id="GO:0048476">
    <property type="term" value="C:Holliday junction resolvase complex"/>
    <property type="evidence" value="ECO:0007669"/>
    <property type="project" value="UniProtKB-UniRule"/>
</dbReference>
<dbReference type="GO" id="GO:0005524">
    <property type="term" value="F:ATP binding"/>
    <property type="evidence" value="ECO:0007669"/>
    <property type="project" value="InterPro"/>
</dbReference>
<dbReference type="GO" id="GO:0000400">
    <property type="term" value="F:four-way junction DNA binding"/>
    <property type="evidence" value="ECO:0007669"/>
    <property type="project" value="UniProtKB-UniRule"/>
</dbReference>
<dbReference type="GO" id="GO:0009378">
    <property type="term" value="F:four-way junction helicase activity"/>
    <property type="evidence" value="ECO:0007669"/>
    <property type="project" value="InterPro"/>
</dbReference>
<dbReference type="GO" id="GO:0006310">
    <property type="term" value="P:DNA recombination"/>
    <property type="evidence" value="ECO:0007669"/>
    <property type="project" value="UniProtKB-UniRule"/>
</dbReference>
<dbReference type="GO" id="GO:0006281">
    <property type="term" value="P:DNA repair"/>
    <property type="evidence" value="ECO:0007669"/>
    <property type="project" value="UniProtKB-UniRule"/>
</dbReference>
<dbReference type="Gene3D" id="1.10.150.20">
    <property type="entry name" value="5' to 3' exonuclease, C-terminal subdomain"/>
    <property type="match status" value="1"/>
</dbReference>
<dbReference type="Gene3D" id="1.10.8.10">
    <property type="entry name" value="DNA helicase RuvA subunit, C-terminal domain"/>
    <property type="match status" value="1"/>
</dbReference>
<dbReference type="Gene3D" id="2.40.50.140">
    <property type="entry name" value="Nucleic acid-binding proteins"/>
    <property type="match status" value="1"/>
</dbReference>
<dbReference type="HAMAP" id="MF_00031">
    <property type="entry name" value="DNA_HJ_migration_RuvA"/>
    <property type="match status" value="1"/>
</dbReference>
<dbReference type="InterPro" id="IPR013849">
    <property type="entry name" value="DNA_helicase_Holl-junc_RuvA_I"/>
</dbReference>
<dbReference type="InterPro" id="IPR003583">
    <property type="entry name" value="Hlx-hairpin-Hlx_DNA-bd_motif"/>
</dbReference>
<dbReference type="InterPro" id="IPR012340">
    <property type="entry name" value="NA-bd_OB-fold"/>
</dbReference>
<dbReference type="InterPro" id="IPR000085">
    <property type="entry name" value="RuvA"/>
</dbReference>
<dbReference type="InterPro" id="IPR010994">
    <property type="entry name" value="RuvA_2-like"/>
</dbReference>
<dbReference type="InterPro" id="IPR011114">
    <property type="entry name" value="RuvA_C"/>
</dbReference>
<dbReference type="InterPro" id="IPR036267">
    <property type="entry name" value="RuvA_C_sf"/>
</dbReference>
<dbReference type="NCBIfam" id="TIGR00084">
    <property type="entry name" value="ruvA"/>
    <property type="match status" value="1"/>
</dbReference>
<dbReference type="Pfam" id="PF14520">
    <property type="entry name" value="HHH_5"/>
    <property type="match status" value="1"/>
</dbReference>
<dbReference type="Pfam" id="PF07499">
    <property type="entry name" value="RuvA_C"/>
    <property type="match status" value="1"/>
</dbReference>
<dbReference type="Pfam" id="PF01330">
    <property type="entry name" value="RuvA_N"/>
    <property type="match status" value="1"/>
</dbReference>
<dbReference type="SMART" id="SM00278">
    <property type="entry name" value="HhH1"/>
    <property type="match status" value="2"/>
</dbReference>
<dbReference type="SUPFAM" id="SSF46929">
    <property type="entry name" value="DNA helicase RuvA subunit, C-terminal domain"/>
    <property type="match status" value="1"/>
</dbReference>
<dbReference type="SUPFAM" id="SSF50249">
    <property type="entry name" value="Nucleic acid-binding proteins"/>
    <property type="match status" value="1"/>
</dbReference>
<dbReference type="SUPFAM" id="SSF47781">
    <property type="entry name" value="RuvA domain 2-like"/>
    <property type="match status" value="1"/>
</dbReference>
<proteinExistence type="inferred from homology"/>
<accession>A8LXW8</accession>
<sequence>MIASVRGVVTATGPDHAVIEVGGVGLAVQCAPGTIADLRVGQPARLATSLVVREDSLTLYGFADDNAKALFELLQTASGVGPRLAQAVLAVHTPETVRAAIANADTAALTRVPGIGKKGAERLVLELRDRIGPVPVGGDGAAGVTTGAWPEQVRQALVGLGWTAGQAEQAVAAVAETVDGEVPPVPVLLRQAIRLLGRTR</sequence>
<name>RUVA_SALAI</name>
<protein>
    <recommendedName>
        <fullName evidence="1">Holliday junction branch migration complex subunit RuvA</fullName>
    </recommendedName>
</protein>
<gene>
    <name evidence="1" type="primary">ruvA</name>
    <name type="ordered locus">Sare_1799</name>
</gene>
<comment type="function">
    <text evidence="1">The RuvA-RuvB-RuvC complex processes Holliday junction (HJ) DNA during genetic recombination and DNA repair, while the RuvA-RuvB complex plays an important role in the rescue of blocked DNA replication forks via replication fork reversal (RFR). RuvA specifically binds to HJ cruciform DNA, conferring on it an open structure. The RuvB hexamer acts as an ATP-dependent pump, pulling dsDNA into and through the RuvAB complex. HJ branch migration allows RuvC to scan DNA until it finds its consensus sequence, where it cleaves and resolves the cruciform DNA.</text>
</comment>
<comment type="subunit">
    <text evidence="1">Homotetramer. Forms an RuvA(8)-RuvB(12)-Holliday junction (HJ) complex. HJ DNA is sandwiched between 2 RuvA tetramers; dsDNA enters through RuvA and exits via RuvB. An RuvB hexamer assembles on each DNA strand where it exits the tetramer. Each RuvB hexamer is contacted by two RuvA subunits (via domain III) on 2 adjacent RuvB subunits; this complex drives branch migration. In the full resolvosome a probable DNA-RuvA(4)-RuvB(12)-RuvC(2) complex forms which resolves the HJ.</text>
</comment>
<comment type="subcellular location">
    <subcellularLocation>
        <location evidence="1">Cytoplasm</location>
    </subcellularLocation>
</comment>
<comment type="domain">
    <text evidence="1">Has three domains with a flexible linker between the domains II and III and assumes an 'L' shape. Domain III is highly mobile and contacts RuvB.</text>
</comment>
<comment type="similarity">
    <text evidence="1">Belongs to the RuvA family.</text>
</comment>
<reference key="1">
    <citation type="submission" date="2007-10" db="EMBL/GenBank/DDBJ databases">
        <title>Complete sequence of Salinispora arenicola CNS-205.</title>
        <authorList>
            <consortium name="US DOE Joint Genome Institute"/>
            <person name="Copeland A."/>
            <person name="Lucas S."/>
            <person name="Lapidus A."/>
            <person name="Barry K."/>
            <person name="Glavina del Rio T."/>
            <person name="Dalin E."/>
            <person name="Tice H."/>
            <person name="Pitluck S."/>
            <person name="Foster B."/>
            <person name="Schmutz J."/>
            <person name="Larimer F."/>
            <person name="Land M."/>
            <person name="Hauser L."/>
            <person name="Kyrpides N."/>
            <person name="Ivanova N."/>
            <person name="Jensen P.R."/>
            <person name="Moore B.S."/>
            <person name="Penn K."/>
            <person name="Jenkins C."/>
            <person name="Udwary D."/>
            <person name="Xiang L."/>
            <person name="Gontang E."/>
            <person name="Richardson P."/>
        </authorList>
    </citation>
    <scope>NUCLEOTIDE SEQUENCE [LARGE SCALE GENOMIC DNA]</scope>
    <source>
        <strain>CNS-205</strain>
    </source>
</reference>
<keyword id="KW-0963">Cytoplasm</keyword>
<keyword id="KW-0227">DNA damage</keyword>
<keyword id="KW-0233">DNA recombination</keyword>
<keyword id="KW-0234">DNA repair</keyword>
<keyword id="KW-0238">DNA-binding</keyword>
<evidence type="ECO:0000255" key="1">
    <source>
        <dbReference type="HAMAP-Rule" id="MF_00031"/>
    </source>
</evidence>
<organism>
    <name type="scientific">Salinispora arenicola (strain CNS-205)</name>
    <dbReference type="NCBI Taxonomy" id="391037"/>
    <lineage>
        <taxon>Bacteria</taxon>
        <taxon>Bacillati</taxon>
        <taxon>Actinomycetota</taxon>
        <taxon>Actinomycetes</taxon>
        <taxon>Micromonosporales</taxon>
        <taxon>Micromonosporaceae</taxon>
        <taxon>Salinispora</taxon>
    </lineage>
</organism>
<feature type="chain" id="PRO_1000074434" description="Holliday junction branch migration complex subunit RuvA">
    <location>
        <begin position="1"/>
        <end position="200"/>
    </location>
</feature>
<feature type="region of interest" description="Domain I" evidence="1">
    <location>
        <begin position="1"/>
        <end position="63"/>
    </location>
</feature>
<feature type="region of interest" description="Domain II" evidence="1">
    <location>
        <begin position="64"/>
        <end position="142"/>
    </location>
</feature>
<feature type="region of interest" description="Flexible linker" evidence="1">
    <location>
        <begin position="143"/>
        <end position="151"/>
    </location>
</feature>
<feature type="region of interest" description="Domain III" evidence="1">
    <location>
        <begin position="151"/>
        <end position="200"/>
    </location>
</feature>